<organism>
    <name type="scientific">Vibrio vulnificus (strain CMCP6)</name>
    <dbReference type="NCBI Taxonomy" id="216895"/>
    <lineage>
        <taxon>Bacteria</taxon>
        <taxon>Pseudomonadati</taxon>
        <taxon>Pseudomonadota</taxon>
        <taxon>Gammaproteobacteria</taxon>
        <taxon>Vibrionales</taxon>
        <taxon>Vibrionaceae</taxon>
        <taxon>Vibrio</taxon>
    </lineage>
</organism>
<reference key="1">
    <citation type="submission" date="2002-12" db="EMBL/GenBank/DDBJ databases">
        <title>Complete genome sequence of Vibrio vulnificus CMCP6.</title>
        <authorList>
            <person name="Rhee J.H."/>
            <person name="Kim S.Y."/>
            <person name="Chung S.S."/>
            <person name="Kim J.J."/>
            <person name="Moon Y.H."/>
            <person name="Jeong H."/>
            <person name="Choy H.E."/>
        </authorList>
    </citation>
    <scope>NUCLEOTIDE SEQUENCE [LARGE SCALE GENOMIC DNA]</scope>
    <source>
        <strain>CMCP6</strain>
    </source>
</reference>
<keyword id="KW-0548">Nucleotidyltransferase</keyword>
<keyword id="KW-0694">RNA-binding</keyword>
<keyword id="KW-0698">rRNA processing</keyword>
<keyword id="KW-0808">Transferase</keyword>
<keyword id="KW-0819">tRNA processing</keyword>
<keyword id="KW-0820">tRNA-binding</keyword>
<proteinExistence type="inferred from homology"/>
<evidence type="ECO:0000255" key="1">
    <source>
        <dbReference type="HAMAP-Rule" id="MF_00564"/>
    </source>
</evidence>
<protein>
    <recommendedName>
        <fullName evidence="1">Ribonuclease PH</fullName>
        <shortName evidence="1">RNase PH</shortName>
        <ecNumber evidence="1">2.7.7.56</ecNumber>
    </recommendedName>
    <alternativeName>
        <fullName evidence="1">tRNA nucleotidyltransferase</fullName>
    </alternativeName>
</protein>
<name>RNPH_VIBVU</name>
<gene>
    <name evidence="1" type="primary">rph</name>
    <name type="ordered locus">VV1_0832</name>
</gene>
<feature type="chain" id="PRO_0000139949" description="Ribonuclease PH">
    <location>
        <begin position="1"/>
        <end position="238"/>
    </location>
</feature>
<feature type="binding site" evidence="1">
    <location>
        <position position="86"/>
    </location>
    <ligand>
        <name>phosphate</name>
        <dbReference type="ChEBI" id="CHEBI:43474"/>
        <note>substrate</note>
    </ligand>
</feature>
<feature type="binding site" evidence="1">
    <location>
        <begin position="124"/>
        <end position="126"/>
    </location>
    <ligand>
        <name>phosphate</name>
        <dbReference type="ChEBI" id="CHEBI:43474"/>
        <note>substrate</note>
    </ligand>
</feature>
<accession>Q8DDX4</accession>
<dbReference type="EC" id="2.7.7.56" evidence="1"/>
<dbReference type="EMBL" id="AE016795">
    <property type="protein sequence ID" value="AAO09335.1"/>
    <property type="molecule type" value="Genomic_DNA"/>
</dbReference>
<dbReference type="RefSeq" id="WP_011078901.1">
    <property type="nucleotide sequence ID" value="NC_004459.3"/>
</dbReference>
<dbReference type="SMR" id="Q8DDX4"/>
<dbReference type="GeneID" id="93895131"/>
<dbReference type="KEGG" id="vvu:VV1_0832"/>
<dbReference type="HOGENOM" id="CLU_050858_0_0_6"/>
<dbReference type="Proteomes" id="UP000002275">
    <property type="component" value="Chromosome 1"/>
</dbReference>
<dbReference type="GO" id="GO:0000175">
    <property type="term" value="F:3'-5'-RNA exonuclease activity"/>
    <property type="evidence" value="ECO:0007669"/>
    <property type="project" value="UniProtKB-UniRule"/>
</dbReference>
<dbReference type="GO" id="GO:0000049">
    <property type="term" value="F:tRNA binding"/>
    <property type="evidence" value="ECO:0007669"/>
    <property type="project" value="UniProtKB-UniRule"/>
</dbReference>
<dbReference type="GO" id="GO:0009022">
    <property type="term" value="F:tRNA nucleotidyltransferase activity"/>
    <property type="evidence" value="ECO:0007669"/>
    <property type="project" value="UniProtKB-UniRule"/>
</dbReference>
<dbReference type="GO" id="GO:0016075">
    <property type="term" value="P:rRNA catabolic process"/>
    <property type="evidence" value="ECO:0007669"/>
    <property type="project" value="UniProtKB-UniRule"/>
</dbReference>
<dbReference type="GO" id="GO:0006364">
    <property type="term" value="P:rRNA processing"/>
    <property type="evidence" value="ECO:0007669"/>
    <property type="project" value="UniProtKB-KW"/>
</dbReference>
<dbReference type="GO" id="GO:0008033">
    <property type="term" value="P:tRNA processing"/>
    <property type="evidence" value="ECO:0007669"/>
    <property type="project" value="UniProtKB-UniRule"/>
</dbReference>
<dbReference type="CDD" id="cd11362">
    <property type="entry name" value="RNase_PH_bact"/>
    <property type="match status" value="1"/>
</dbReference>
<dbReference type="FunFam" id="3.30.230.70:FF:000003">
    <property type="entry name" value="Ribonuclease PH"/>
    <property type="match status" value="1"/>
</dbReference>
<dbReference type="Gene3D" id="3.30.230.70">
    <property type="entry name" value="GHMP Kinase, N-terminal domain"/>
    <property type="match status" value="1"/>
</dbReference>
<dbReference type="HAMAP" id="MF_00564">
    <property type="entry name" value="RNase_PH"/>
    <property type="match status" value="1"/>
</dbReference>
<dbReference type="InterPro" id="IPR001247">
    <property type="entry name" value="ExoRNase_PH_dom1"/>
</dbReference>
<dbReference type="InterPro" id="IPR015847">
    <property type="entry name" value="ExoRNase_PH_dom2"/>
</dbReference>
<dbReference type="InterPro" id="IPR036345">
    <property type="entry name" value="ExoRNase_PH_dom2_sf"/>
</dbReference>
<dbReference type="InterPro" id="IPR027408">
    <property type="entry name" value="PNPase/RNase_PH_dom_sf"/>
</dbReference>
<dbReference type="InterPro" id="IPR020568">
    <property type="entry name" value="Ribosomal_Su5_D2-typ_SF"/>
</dbReference>
<dbReference type="InterPro" id="IPR050080">
    <property type="entry name" value="RNase_PH"/>
</dbReference>
<dbReference type="InterPro" id="IPR002381">
    <property type="entry name" value="RNase_PH_bac-type"/>
</dbReference>
<dbReference type="InterPro" id="IPR018336">
    <property type="entry name" value="RNase_PH_CS"/>
</dbReference>
<dbReference type="NCBIfam" id="TIGR01966">
    <property type="entry name" value="RNasePH"/>
    <property type="match status" value="1"/>
</dbReference>
<dbReference type="PANTHER" id="PTHR11953">
    <property type="entry name" value="EXOSOME COMPLEX COMPONENT"/>
    <property type="match status" value="1"/>
</dbReference>
<dbReference type="PANTHER" id="PTHR11953:SF0">
    <property type="entry name" value="EXOSOME COMPLEX COMPONENT RRP41"/>
    <property type="match status" value="1"/>
</dbReference>
<dbReference type="Pfam" id="PF01138">
    <property type="entry name" value="RNase_PH"/>
    <property type="match status" value="1"/>
</dbReference>
<dbReference type="Pfam" id="PF03725">
    <property type="entry name" value="RNase_PH_C"/>
    <property type="match status" value="1"/>
</dbReference>
<dbReference type="SUPFAM" id="SSF55666">
    <property type="entry name" value="Ribonuclease PH domain 2-like"/>
    <property type="match status" value="1"/>
</dbReference>
<dbReference type="SUPFAM" id="SSF54211">
    <property type="entry name" value="Ribosomal protein S5 domain 2-like"/>
    <property type="match status" value="1"/>
</dbReference>
<dbReference type="PROSITE" id="PS01277">
    <property type="entry name" value="RIBONUCLEASE_PH"/>
    <property type="match status" value="1"/>
</dbReference>
<sequence length="238" mass="25566">MRPNDRAADQVRPIKITRNYTAYAEGSVLVEFGNTKVLCNATVEESVPRWLKGQGKGWVTAEYGMLPRATHSRTRREAANGKQGGRTMEIQRLIARSLRAVVDLEAMGEFMITVDCDVIQADGGTRTASISGASVAMADAFQHLVDSGKLKANPMKGHVAAVSVGILGEDVLCDLEYVEDSAADTDMNVVMTEEGKMIEIQGTAEGEPFSHEQLLALLESAKKGISEIVAAQKAALAN</sequence>
<comment type="function">
    <text evidence="1">Phosphorolytic 3'-5' exoribonuclease that plays an important role in tRNA 3'-end maturation. Removes nucleotide residues following the 3'-CCA terminus of tRNAs; can also add nucleotides to the ends of RNA molecules by using nucleoside diphosphates as substrates, but this may not be physiologically important. Probably plays a role in initiation of 16S rRNA degradation (leading to ribosome degradation) during starvation.</text>
</comment>
<comment type="catalytic activity">
    <reaction evidence="1">
        <text>tRNA(n+1) + phosphate = tRNA(n) + a ribonucleoside 5'-diphosphate</text>
        <dbReference type="Rhea" id="RHEA:10628"/>
        <dbReference type="Rhea" id="RHEA-COMP:17343"/>
        <dbReference type="Rhea" id="RHEA-COMP:17344"/>
        <dbReference type="ChEBI" id="CHEBI:43474"/>
        <dbReference type="ChEBI" id="CHEBI:57930"/>
        <dbReference type="ChEBI" id="CHEBI:173114"/>
        <dbReference type="EC" id="2.7.7.56"/>
    </reaction>
</comment>
<comment type="subunit">
    <text evidence="1">Homohexameric ring arranged as a trimer of dimers.</text>
</comment>
<comment type="similarity">
    <text evidence="1">Belongs to the RNase PH family.</text>
</comment>